<feature type="chain" id="PRO_0000119495" description="Glutamate--tRNA ligase">
    <location>
        <begin position="1"/>
        <end position="473"/>
    </location>
</feature>
<feature type="short sequence motif" description="'HIGH' region" evidence="1">
    <location>
        <begin position="10"/>
        <end position="20"/>
    </location>
</feature>
<feature type="short sequence motif" description="'KMSKS' region" evidence="1">
    <location>
        <begin position="242"/>
        <end position="246"/>
    </location>
</feature>
<feature type="binding site" evidence="1">
    <location>
        <position position="98"/>
    </location>
    <ligand>
        <name>Zn(2+)</name>
        <dbReference type="ChEBI" id="CHEBI:29105"/>
    </ligand>
</feature>
<feature type="binding site" evidence="1">
    <location>
        <position position="100"/>
    </location>
    <ligand>
        <name>Zn(2+)</name>
        <dbReference type="ChEBI" id="CHEBI:29105"/>
    </ligand>
</feature>
<feature type="binding site" evidence="1">
    <location>
        <position position="125"/>
    </location>
    <ligand>
        <name>Zn(2+)</name>
        <dbReference type="ChEBI" id="CHEBI:29105"/>
    </ligand>
</feature>
<feature type="binding site" evidence="1">
    <location>
        <position position="127"/>
    </location>
    <ligand>
        <name>Zn(2+)</name>
        <dbReference type="ChEBI" id="CHEBI:29105"/>
    </ligand>
</feature>
<feature type="binding site" evidence="1">
    <location>
        <position position="245"/>
    </location>
    <ligand>
        <name>ATP</name>
        <dbReference type="ChEBI" id="CHEBI:30616"/>
    </ligand>
</feature>
<gene>
    <name evidence="1" type="primary">gltX</name>
    <name type="ordered locus">aq_1221</name>
</gene>
<dbReference type="EC" id="6.1.1.17" evidence="1"/>
<dbReference type="EMBL" id="AE000657">
    <property type="protein sequence ID" value="AAC07230.1"/>
    <property type="molecule type" value="Genomic_DNA"/>
</dbReference>
<dbReference type="PIR" id="D70405">
    <property type="entry name" value="D70405"/>
</dbReference>
<dbReference type="RefSeq" id="NP_213835.1">
    <property type="nucleotide sequence ID" value="NC_000918.1"/>
</dbReference>
<dbReference type="RefSeq" id="WP_010880773.1">
    <property type="nucleotide sequence ID" value="NC_000918.1"/>
</dbReference>
<dbReference type="SMR" id="O67271"/>
<dbReference type="FunCoup" id="O67271">
    <property type="interactions" value="483"/>
</dbReference>
<dbReference type="STRING" id="224324.aq_1221"/>
<dbReference type="EnsemblBacteria" id="AAC07230">
    <property type="protein sequence ID" value="AAC07230"/>
    <property type="gene ID" value="aq_1221"/>
</dbReference>
<dbReference type="KEGG" id="aae:aq_1221"/>
<dbReference type="PATRIC" id="fig|224324.8.peg.950"/>
<dbReference type="eggNOG" id="COG0008">
    <property type="taxonomic scope" value="Bacteria"/>
</dbReference>
<dbReference type="HOGENOM" id="CLU_015768_6_3_0"/>
<dbReference type="InParanoid" id="O67271"/>
<dbReference type="OrthoDB" id="9801560at2"/>
<dbReference type="Proteomes" id="UP000000798">
    <property type="component" value="Chromosome"/>
</dbReference>
<dbReference type="GO" id="GO:0005829">
    <property type="term" value="C:cytosol"/>
    <property type="evidence" value="ECO:0000318"/>
    <property type="project" value="GO_Central"/>
</dbReference>
<dbReference type="GO" id="GO:0005524">
    <property type="term" value="F:ATP binding"/>
    <property type="evidence" value="ECO:0007669"/>
    <property type="project" value="UniProtKB-UniRule"/>
</dbReference>
<dbReference type="GO" id="GO:0004818">
    <property type="term" value="F:glutamate-tRNA ligase activity"/>
    <property type="evidence" value="ECO:0000318"/>
    <property type="project" value="GO_Central"/>
</dbReference>
<dbReference type="GO" id="GO:0000049">
    <property type="term" value="F:tRNA binding"/>
    <property type="evidence" value="ECO:0007669"/>
    <property type="project" value="InterPro"/>
</dbReference>
<dbReference type="GO" id="GO:0008270">
    <property type="term" value="F:zinc ion binding"/>
    <property type="evidence" value="ECO:0007669"/>
    <property type="project" value="UniProtKB-UniRule"/>
</dbReference>
<dbReference type="GO" id="GO:0006424">
    <property type="term" value="P:glutamyl-tRNA aminoacylation"/>
    <property type="evidence" value="ECO:0000318"/>
    <property type="project" value="GO_Central"/>
</dbReference>
<dbReference type="CDD" id="cd00808">
    <property type="entry name" value="GluRS_core"/>
    <property type="match status" value="1"/>
</dbReference>
<dbReference type="FunFam" id="3.40.50.620:FF:000149">
    <property type="entry name" value="Glutamate--tRNA ligase"/>
    <property type="match status" value="1"/>
</dbReference>
<dbReference type="FunFam" id="1.10.8.70:FF:000003">
    <property type="entry name" value="Glutamate--tRNA ligase 1"/>
    <property type="match status" value="1"/>
</dbReference>
<dbReference type="Gene3D" id="1.10.10.350">
    <property type="match status" value="1"/>
</dbReference>
<dbReference type="Gene3D" id="1.10.8.70">
    <property type="entry name" value="Glutamate-tRNA synthetase, class I, anticodon-binding domain 1"/>
    <property type="match status" value="1"/>
</dbReference>
<dbReference type="Gene3D" id="3.40.50.620">
    <property type="entry name" value="HUPs"/>
    <property type="match status" value="1"/>
</dbReference>
<dbReference type="HAMAP" id="MF_00022">
    <property type="entry name" value="Glu_tRNA_synth_type1"/>
    <property type="match status" value="1"/>
</dbReference>
<dbReference type="InterPro" id="IPR045462">
    <property type="entry name" value="aa-tRNA-synth_I_cd-bd"/>
</dbReference>
<dbReference type="InterPro" id="IPR020751">
    <property type="entry name" value="aa-tRNA-synth_I_codon-bd_sub2"/>
</dbReference>
<dbReference type="InterPro" id="IPR001412">
    <property type="entry name" value="aa-tRNA-synth_I_CS"/>
</dbReference>
<dbReference type="InterPro" id="IPR008925">
    <property type="entry name" value="aa_tRNA-synth_I_cd-bd_sf"/>
</dbReference>
<dbReference type="InterPro" id="IPR004527">
    <property type="entry name" value="Glu-tRNA-ligase_bac/mito"/>
</dbReference>
<dbReference type="InterPro" id="IPR020752">
    <property type="entry name" value="Glu-tRNA-synth_I_codon-bd_sub1"/>
</dbReference>
<dbReference type="InterPro" id="IPR000924">
    <property type="entry name" value="Glu/Gln-tRNA-synth"/>
</dbReference>
<dbReference type="InterPro" id="IPR020058">
    <property type="entry name" value="Glu/Gln-tRNA-synth_Ib_cat-dom"/>
</dbReference>
<dbReference type="InterPro" id="IPR049940">
    <property type="entry name" value="GluQ/Sye"/>
</dbReference>
<dbReference type="InterPro" id="IPR033910">
    <property type="entry name" value="GluRS_core"/>
</dbReference>
<dbReference type="InterPro" id="IPR014729">
    <property type="entry name" value="Rossmann-like_a/b/a_fold"/>
</dbReference>
<dbReference type="NCBIfam" id="TIGR00464">
    <property type="entry name" value="gltX_bact"/>
    <property type="match status" value="1"/>
</dbReference>
<dbReference type="NCBIfam" id="NF004315">
    <property type="entry name" value="PRK05710.1-4"/>
    <property type="match status" value="1"/>
</dbReference>
<dbReference type="PANTHER" id="PTHR43311">
    <property type="entry name" value="GLUTAMATE--TRNA LIGASE"/>
    <property type="match status" value="1"/>
</dbReference>
<dbReference type="PANTHER" id="PTHR43311:SF2">
    <property type="entry name" value="GLUTAMATE--TRNA LIGASE, MITOCHONDRIAL-RELATED"/>
    <property type="match status" value="1"/>
</dbReference>
<dbReference type="Pfam" id="PF19269">
    <property type="entry name" value="Anticodon_2"/>
    <property type="match status" value="1"/>
</dbReference>
<dbReference type="Pfam" id="PF00749">
    <property type="entry name" value="tRNA-synt_1c"/>
    <property type="match status" value="1"/>
</dbReference>
<dbReference type="PRINTS" id="PR00987">
    <property type="entry name" value="TRNASYNTHGLU"/>
</dbReference>
<dbReference type="SUPFAM" id="SSF48163">
    <property type="entry name" value="An anticodon-binding domain of class I aminoacyl-tRNA synthetases"/>
    <property type="match status" value="1"/>
</dbReference>
<dbReference type="SUPFAM" id="SSF52374">
    <property type="entry name" value="Nucleotidylyl transferase"/>
    <property type="match status" value="1"/>
</dbReference>
<dbReference type="PROSITE" id="PS00178">
    <property type="entry name" value="AA_TRNA_LIGASE_I"/>
    <property type="match status" value="1"/>
</dbReference>
<comment type="function">
    <text evidence="1">Catalyzes the attachment of glutamate to tRNA(Glu) in a two-step reaction: glutamate is first activated by ATP to form Glu-AMP and then transferred to the acceptor end of tRNA(Glu).</text>
</comment>
<comment type="catalytic activity">
    <reaction evidence="1">
        <text>tRNA(Glu) + L-glutamate + ATP = L-glutamyl-tRNA(Glu) + AMP + diphosphate</text>
        <dbReference type="Rhea" id="RHEA:23540"/>
        <dbReference type="Rhea" id="RHEA-COMP:9663"/>
        <dbReference type="Rhea" id="RHEA-COMP:9680"/>
        <dbReference type="ChEBI" id="CHEBI:29985"/>
        <dbReference type="ChEBI" id="CHEBI:30616"/>
        <dbReference type="ChEBI" id="CHEBI:33019"/>
        <dbReference type="ChEBI" id="CHEBI:78442"/>
        <dbReference type="ChEBI" id="CHEBI:78520"/>
        <dbReference type="ChEBI" id="CHEBI:456215"/>
        <dbReference type="EC" id="6.1.1.17"/>
    </reaction>
</comment>
<comment type="cofactor">
    <cofactor evidence="1">
        <name>Zn(2+)</name>
        <dbReference type="ChEBI" id="CHEBI:29105"/>
    </cofactor>
    <text evidence="1">Binds 1 zinc ion per subunit.</text>
</comment>
<comment type="subunit">
    <text evidence="1">Monomer.</text>
</comment>
<comment type="subcellular location">
    <subcellularLocation>
        <location evidence="1">Cytoplasm</location>
    </subcellularLocation>
</comment>
<comment type="similarity">
    <text evidence="1">Belongs to the class-I aminoacyl-tRNA synthetase family. Glutamate--tRNA ligase type 1 subfamily.</text>
</comment>
<sequence length="473" mass="55122">MSKVKTRFAPSPTGYLHLGNARTAIFSYLFARHNNGGFVLRIEDTDPERSKKEYEEMLIEDLKWLGIDWDEFYRQSERFDIYREYVNKLLESGHAYPCFCTPEELEKEREEARKKGIPYRYSGKCRHLTPEEVEKFKKEGKPFAIRFKVPENRTVVFEDLIKGHIAINTDDFGDFVIVRSDGSPTYNFVVVVDDALMGITHVIRGEDHIPNTPKQILIYEALGFPVPKFAHLPVILGEDRSKLSKRHGAVSVRAYREEGYMPEALFNYLCLLGWSPPEEGREIFSKEELIKIFDLKDVNDSPAVFNKEKLKWMNGVYIREVLPLDVLLERAIPFLEKAGYDTSDREYIKKVLEYTRDSFDTLSEMVDRLRPFFVDEFEIPEELWSFLDDEKAYQVLSAFLEKIREKKPETPQEVKKLAKEIQKALKVKPPQVWKPLRIALTGELEGVGIDILIAVLPKEKIEKRILRVLEKLS</sequence>
<protein>
    <recommendedName>
        <fullName evidence="1">Glutamate--tRNA ligase</fullName>
        <ecNumber evidence="1">6.1.1.17</ecNumber>
    </recommendedName>
    <alternativeName>
        <fullName evidence="1">Glutamyl-tRNA synthetase</fullName>
        <shortName evidence="1">GluRS</shortName>
    </alternativeName>
</protein>
<name>SYE_AQUAE</name>
<evidence type="ECO:0000255" key="1">
    <source>
        <dbReference type="HAMAP-Rule" id="MF_00022"/>
    </source>
</evidence>
<proteinExistence type="inferred from homology"/>
<keyword id="KW-0030">Aminoacyl-tRNA synthetase</keyword>
<keyword id="KW-0067">ATP-binding</keyword>
<keyword id="KW-0963">Cytoplasm</keyword>
<keyword id="KW-0436">Ligase</keyword>
<keyword id="KW-0479">Metal-binding</keyword>
<keyword id="KW-0547">Nucleotide-binding</keyword>
<keyword id="KW-0648">Protein biosynthesis</keyword>
<keyword id="KW-1185">Reference proteome</keyword>
<keyword id="KW-0862">Zinc</keyword>
<reference key="1">
    <citation type="journal article" date="1998" name="Nature">
        <title>The complete genome of the hyperthermophilic bacterium Aquifex aeolicus.</title>
        <authorList>
            <person name="Deckert G."/>
            <person name="Warren P.V."/>
            <person name="Gaasterland T."/>
            <person name="Young W.G."/>
            <person name="Lenox A.L."/>
            <person name="Graham D.E."/>
            <person name="Overbeek R."/>
            <person name="Snead M.A."/>
            <person name="Keller M."/>
            <person name="Aujay M."/>
            <person name="Huber R."/>
            <person name="Feldman R.A."/>
            <person name="Short J.M."/>
            <person name="Olsen G.J."/>
            <person name="Swanson R.V."/>
        </authorList>
    </citation>
    <scope>NUCLEOTIDE SEQUENCE [LARGE SCALE GENOMIC DNA]</scope>
    <source>
        <strain>VF5</strain>
    </source>
</reference>
<organism>
    <name type="scientific">Aquifex aeolicus (strain VF5)</name>
    <dbReference type="NCBI Taxonomy" id="224324"/>
    <lineage>
        <taxon>Bacteria</taxon>
        <taxon>Pseudomonadati</taxon>
        <taxon>Aquificota</taxon>
        <taxon>Aquificia</taxon>
        <taxon>Aquificales</taxon>
        <taxon>Aquificaceae</taxon>
        <taxon>Aquifex</taxon>
    </lineage>
</organism>
<accession>O67271</accession>